<organism>
    <name type="scientific">Salmonella heidelberg (strain SL476)</name>
    <dbReference type="NCBI Taxonomy" id="454169"/>
    <lineage>
        <taxon>Bacteria</taxon>
        <taxon>Pseudomonadati</taxon>
        <taxon>Pseudomonadota</taxon>
        <taxon>Gammaproteobacteria</taxon>
        <taxon>Enterobacterales</taxon>
        <taxon>Enterobacteriaceae</taxon>
        <taxon>Salmonella</taxon>
    </lineage>
</organism>
<proteinExistence type="inferred from homology"/>
<sequence>MQEQYRPEEIESKVQLHWDEKRTFEVTEDESKEKYYCLSMLPYPSGRLHMGHVRNYTIGDVVARYQRMLGKNVLQPIGWDAFGLPAEGAAVKNNTAPAPWTYDNIAYMKNQLKTLGFGYDWSREIATCTPEYYRWEQKFFTELYKKGLVYKKTSAVNWCPNDQTVLANEQVIDGCCWRCDTKVERKEIPQWFIKITAYADELLRDLDKLDHWPDTVKTMQRNWIGRSEGVEITFDVKGYDNTLTVYTTRPDTFMGATYLAVAAGHPLAQKAAANNAELAAFIDECRNTKVAEAEMATMEKKGVDTGYKAIHPLTGEEIPVWAANFVLMEYGTGAVMAVPGHDQRDYEFASKYGLTIKPVILAADGSEPDLSEQALTEKGVLFNSGEFDGLAFEAAFNAIADKLAEKGVGERKVNYRLRDWGVSRQRYWGAPIPMVTLEDGTVLPTPEDQLPVILPEDVVMDGITSPIKADPEWAKTTVNGMPALRETDTFDTFMESSWYYARYTCPQYQEGMLDSKAANYWLPVDIYIGGIEHAIMHLLYFRFFHKLMRDAGMVTSDEPAKQLLCQGMVLADAFYYVGENGERNWVSPVDAIVERDEKGRIVKAKDAAGHELVYTGMSKMSKSKNNGIDPQVMVERYGADTVRLFMMFASPADMTLEWQESGVEGANRFIKRVWKLVYEHTAKGPVAALNVDALSEDQKALRRDVHKTIAKVTDDIGRRQTFNTAIAAIMELMNKLAKAPQEGEQDRALLQEALQAVVRMLNPFTPHVCFTLWQELGGEGDIDNAPWPVADEQAMVENTTLVVVQVNGKVRGKITVAVDATEEQVRERAGQEHLVAKYLDGVTVRKVIYVPGKLLNLVVG</sequence>
<evidence type="ECO:0000255" key="1">
    <source>
        <dbReference type="HAMAP-Rule" id="MF_00049"/>
    </source>
</evidence>
<dbReference type="EC" id="6.1.1.4" evidence="1"/>
<dbReference type="EMBL" id="CP001120">
    <property type="protein sequence ID" value="ACF70251.1"/>
    <property type="molecule type" value="Genomic_DNA"/>
</dbReference>
<dbReference type="RefSeq" id="WP_001157916.1">
    <property type="nucleotide sequence ID" value="NC_011083.1"/>
</dbReference>
<dbReference type="SMR" id="B4TB51"/>
<dbReference type="KEGG" id="seh:SeHA_C0764"/>
<dbReference type="HOGENOM" id="CLU_004427_0_0_6"/>
<dbReference type="Proteomes" id="UP000001866">
    <property type="component" value="Chromosome"/>
</dbReference>
<dbReference type="GO" id="GO:0005829">
    <property type="term" value="C:cytosol"/>
    <property type="evidence" value="ECO:0007669"/>
    <property type="project" value="TreeGrafter"/>
</dbReference>
<dbReference type="GO" id="GO:0002161">
    <property type="term" value="F:aminoacyl-tRNA deacylase activity"/>
    <property type="evidence" value="ECO:0007669"/>
    <property type="project" value="InterPro"/>
</dbReference>
<dbReference type="GO" id="GO:0005524">
    <property type="term" value="F:ATP binding"/>
    <property type="evidence" value="ECO:0007669"/>
    <property type="project" value="UniProtKB-UniRule"/>
</dbReference>
<dbReference type="GO" id="GO:0004823">
    <property type="term" value="F:leucine-tRNA ligase activity"/>
    <property type="evidence" value="ECO:0007669"/>
    <property type="project" value="UniProtKB-UniRule"/>
</dbReference>
<dbReference type="GO" id="GO:0006429">
    <property type="term" value="P:leucyl-tRNA aminoacylation"/>
    <property type="evidence" value="ECO:0007669"/>
    <property type="project" value="UniProtKB-UniRule"/>
</dbReference>
<dbReference type="CDD" id="cd07958">
    <property type="entry name" value="Anticodon_Ia_Leu_BEm"/>
    <property type="match status" value="1"/>
</dbReference>
<dbReference type="CDD" id="cd00812">
    <property type="entry name" value="LeuRS_core"/>
    <property type="match status" value="1"/>
</dbReference>
<dbReference type="FunFam" id="1.10.730.10:FF:000002">
    <property type="entry name" value="Leucine--tRNA ligase"/>
    <property type="match status" value="2"/>
</dbReference>
<dbReference type="FunFam" id="2.20.28.290:FF:000001">
    <property type="entry name" value="Leucine--tRNA ligase"/>
    <property type="match status" value="1"/>
</dbReference>
<dbReference type="FunFam" id="3.10.20.590:FF:000001">
    <property type="entry name" value="Leucine--tRNA ligase"/>
    <property type="match status" value="1"/>
</dbReference>
<dbReference type="FunFam" id="3.40.50.620:FF:000003">
    <property type="entry name" value="Leucine--tRNA ligase"/>
    <property type="match status" value="1"/>
</dbReference>
<dbReference type="FunFam" id="3.40.50.620:FF:000124">
    <property type="entry name" value="Leucine--tRNA ligase"/>
    <property type="match status" value="1"/>
</dbReference>
<dbReference type="FunFam" id="3.90.740.10:FF:000012">
    <property type="entry name" value="Leucine--tRNA ligase"/>
    <property type="match status" value="1"/>
</dbReference>
<dbReference type="Gene3D" id="2.20.28.290">
    <property type="match status" value="1"/>
</dbReference>
<dbReference type="Gene3D" id="3.10.20.590">
    <property type="match status" value="1"/>
</dbReference>
<dbReference type="Gene3D" id="3.40.50.620">
    <property type="entry name" value="HUPs"/>
    <property type="match status" value="2"/>
</dbReference>
<dbReference type="Gene3D" id="1.10.730.10">
    <property type="entry name" value="Isoleucyl-tRNA Synthetase, Domain 1"/>
    <property type="match status" value="2"/>
</dbReference>
<dbReference type="HAMAP" id="MF_00049_B">
    <property type="entry name" value="Leu_tRNA_synth_B"/>
    <property type="match status" value="1"/>
</dbReference>
<dbReference type="InterPro" id="IPR001412">
    <property type="entry name" value="aa-tRNA-synth_I_CS"/>
</dbReference>
<dbReference type="InterPro" id="IPR002300">
    <property type="entry name" value="aa-tRNA-synth_Ia"/>
</dbReference>
<dbReference type="InterPro" id="IPR002302">
    <property type="entry name" value="Leu-tRNA-ligase"/>
</dbReference>
<dbReference type="InterPro" id="IPR025709">
    <property type="entry name" value="Leu_tRNA-synth_edit"/>
</dbReference>
<dbReference type="InterPro" id="IPR013155">
    <property type="entry name" value="M/V/L/I-tRNA-synth_anticd-bd"/>
</dbReference>
<dbReference type="InterPro" id="IPR015413">
    <property type="entry name" value="Methionyl/Leucyl_tRNA_Synth"/>
</dbReference>
<dbReference type="InterPro" id="IPR014729">
    <property type="entry name" value="Rossmann-like_a/b/a_fold"/>
</dbReference>
<dbReference type="InterPro" id="IPR009080">
    <property type="entry name" value="tRNAsynth_Ia_anticodon-bd"/>
</dbReference>
<dbReference type="InterPro" id="IPR009008">
    <property type="entry name" value="Val/Leu/Ile-tRNA-synth_edit"/>
</dbReference>
<dbReference type="NCBIfam" id="TIGR00396">
    <property type="entry name" value="leuS_bact"/>
    <property type="match status" value="1"/>
</dbReference>
<dbReference type="PANTHER" id="PTHR43740:SF2">
    <property type="entry name" value="LEUCINE--TRNA LIGASE, MITOCHONDRIAL"/>
    <property type="match status" value="1"/>
</dbReference>
<dbReference type="PANTHER" id="PTHR43740">
    <property type="entry name" value="LEUCYL-TRNA SYNTHETASE"/>
    <property type="match status" value="1"/>
</dbReference>
<dbReference type="Pfam" id="PF08264">
    <property type="entry name" value="Anticodon_1"/>
    <property type="match status" value="1"/>
</dbReference>
<dbReference type="Pfam" id="PF00133">
    <property type="entry name" value="tRNA-synt_1"/>
    <property type="match status" value="2"/>
</dbReference>
<dbReference type="Pfam" id="PF13603">
    <property type="entry name" value="tRNA-synt_1_2"/>
    <property type="match status" value="1"/>
</dbReference>
<dbReference type="Pfam" id="PF09334">
    <property type="entry name" value="tRNA-synt_1g"/>
    <property type="match status" value="1"/>
</dbReference>
<dbReference type="PRINTS" id="PR00985">
    <property type="entry name" value="TRNASYNTHLEU"/>
</dbReference>
<dbReference type="SUPFAM" id="SSF47323">
    <property type="entry name" value="Anticodon-binding domain of a subclass of class I aminoacyl-tRNA synthetases"/>
    <property type="match status" value="1"/>
</dbReference>
<dbReference type="SUPFAM" id="SSF52374">
    <property type="entry name" value="Nucleotidylyl transferase"/>
    <property type="match status" value="1"/>
</dbReference>
<dbReference type="SUPFAM" id="SSF50677">
    <property type="entry name" value="ValRS/IleRS/LeuRS editing domain"/>
    <property type="match status" value="1"/>
</dbReference>
<dbReference type="PROSITE" id="PS00178">
    <property type="entry name" value="AA_TRNA_LIGASE_I"/>
    <property type="match status" value="1"/>
</dbReference>
<protein>
    <recommendedName>
        <fullName evidence="1">Leucine--tRNA ligase</fullName>
        <ecNumber evidence="1">6.1.1.4</ecNumber>
    </recommendedName>
    <alternativeName>
        <fullName evidence="1">Leucyl-tRNA synthetase</fullName>
        <shortName evidence="1">LeuRS</shortName>
    </alternativeName>
</protein>
<accession>B4TB51</accession>
<feature type="chain" id="PRO_1000091358" description="Leucine--tRNA ligase">
    <location>
        <begin position="1"/>
        <end position="860"/>
    </location>
</feature>
<feature type="short sequence motif" description="'HIGH' region">
    <location>
        <begin position="42"/>
        <end position="52"/>
    </location>
</feature>
<feature type="short sequence motif" description="'KMSKS' region">
    <location>
        <begin position="619"/>
        <end position="623"/>
    </location>
</feature>
<feature type="binding site" evidence="1">
    <location>
        <position position="622"/>
    </location>
    <ligand>
        <name>ATP</name>
        <dbReference type="ChEBI" id="CHEBI:30616"/>
    </ligand>
</feature>
<reference key="1">
    <citation type="journal article" date="2011" name="J. Bacteriol.">
        <title>Comparative genomics of 28 Salmonella enterica isolates: evidence for CRISPR-mediated adaptive sublineage evolution.</title>
        <authorList>
            <person name="Fricke W.F."/>
            <person name="Mammel M.K."/>
            <person name="McDermott P.F."/>
            <person name="Tartera C."/>
            <person name="White D.G."/>
            <person name="Leclerc J.E."/>
            <person name="Ravel J."/>
            <person name="Cebula T.A."/>
        </authorList>
    </citation>
    <scope>NUCLEOTIDE SEQUENCE [LARGE SCALE GENOMIC DNA]</scope>
    <source>
        <strain>SL476</strain>
    </source>
</reference>
<gene>
    <name evidence="1" type="primary">leuS</name>
    <name type="ordered locus">SeHA_C0764</name>
</gene>
<comment type="catalytic activity">
    <reaction evidence="1">
        <text>tRNA(Leu) + L-leucine + ATP = L-leucyl-tRNA(Leu) + AMP + diphosphate</text>
        <dbReference type="Rhea" id="RHEA:11688"/>
        <dbReference type="Rhea" id="RHEA-COMP:9613"/>
        <dbReference type="Rhea" id="RHEA-COMP:9622"/>
        <dbReference type="ChEBI" id="CHEBI:30616"/>
        <dbReference type="ChEBI" id="CHEBI:33019"/>
        <dbReference type="ChEBI" id="CHEBI:57427"/>
        <dbReference type="ChEBI" id="CHEBI:78442"/>
        <dbReference type="ChEBI" id="CHEBI:78494"/>
        <dbReference type="ChEBI" id="CHEBI:456215"/>
        <dbReference type="EC" id="6.1.1.4"/>
    </reaction>
</comment>
<comment type="subcellular location">
    <subcellularLocation>
        <location evidence="1">Cytoplasm</location>
    </subcellularLocation>
</comment>
<comment type="similarity">
    <text evidence="1">Belongs to the class-I aminoacyl-tRNA synthetase family.</text>
</comment>
<name>SYL_SALHS</name>
<keyword id="KW-0030">Aminoacyl-tRNA synthetase</keyword>
<keyword id="KW-0067">ATP-binding</keyword>
<keyword id="KW-0963">Cytoplasm</keyword>
<keyword id="KW-0436">Ligase</keyword>
<keyword id="KW-0547">Nucleotide-binding</keyword>
<keyword id="KW-0648">Protein biosynthesis</keyword>